<proteinExistence type="inferred from homology"/>
<protein>
    <recommendedName>
        <fullName evidence="1">NADH-quinone oxidoreductase subunit K</fullName>
        <ecNumber evidence="1">7.1.1.-</ecNumber>
    </recommendedName>
    <alternativeName>
        <fullName evidence="1">NADH dehydrogenase I subunit K</fullName>
    </alternativeName>
    <alternativeName>
        <fullName evidence="1">NDH-1 subunit K</fullName>
    </alternativeName>
</protein>
<name>NUOK_ALIB4</name>
<keyword id="KW-0997">Cell inner membrane</keyword>
<keyword id="KW-1003">Cell membrane</keyword>
<keyword id="KW-0472">Membrane</keyword>
<keyword id="KW-0520">NAD</keyword>
<keyword id="KW-0874">Quinone</keyword>
<keyword id="KW-1185">Reference proteome</keyword>
<keyword id="KW-1278">Translocase</keyword>
<keyword id="KW-0812">Transmembrane</keyword>
<keyword id="KW-1133">Transmembrane helix</keyword>
<keyword id="KW-0813">Transport</keyword>
<keyword id="KW-0830">Ubiquinone</keyword>
<reference key="1">
    <citation type="journal article" date="2007" name="PLoS ONE">
        <title>The complete genome sequence and analysis of the Epsilonproteobacterium Arcobacter butzleri.</title>
        <authorList>
            <person name="Miller W.G."/>
            <person name="Parker C.T."/>
            <person name="Rubenfield M."/>
            <person name="Mendz G.L."/>
            <person name="Woesten M.M.S.M."/>
            <person name="Ussery D.W."/>
            <person name="Stolz J.F."/>
            <person name="Binnewies T.T."/>
            <person name="Hallin P.F."/>
            <person name="Wang G."/>
            <person name="Malek J.A."/>
            <person name="Rogosin A."/>
            <person name="Stanker L.H."/>
            <person name="Mandrell R.E."/>
        </authorList>
    </citation>
    <scope>NUCLEOTIDE SEQUENCE [LARGE SCALE GENOMIC DNA]</scope>
    <source>
        <strain>RM4018</strain>
    </source>
</reference>
<accession>A8ERK6</accession>
<dbReference type="EC" id="7.1.1.-" evidence="1"/>
<dbReference type="EMBL" id="CP000361">
    <property type="protein sequence ID" value="ABV66580.1"/>
    <property type="molecule type" value="Genomic_DNA"/>
</dbReference>
<dbReference type="RefSeq" id="WP_004510363.1">
    <property type="nucleotide sequence ID" value="NC_009850.1"/>
</dbReference>
<dbReference type="SMR" id="A8ERK6"/>
<dbReference type="STRING" id="367737.Abu_0305"/>
<dbReference type="GeneID" id="24303725"/>
<dbReference type="KEGG" id="abu:Abu_0305"/>
<dbReference type="eggNOG" id="COG0713">
    <property type="taxonomic scope" value="Bacteria"/>
</dbReference>
<dbReference type="HOGENOM" id="CLU_144724_0_0_7"/>
<dbReference type="Proteomes" id="UP000001136">
    <property type="component" value="Chromosome"/>
</dbReference>
<dbReference type="GO" id="GO:0030964">
    <property type="term" value="C:NADH dehydrogenase complex"/>
    <property type="evidence" value="ECO:0007669"/>
    <property type="project" value="TreeGrafter"/>
</dbReference>
<dbReference type="GO" id="GO:0005886">
    <property type="term" value="C:plasma membrane"/>
    <property type="evidence" value="ECO:0007669"/>
    <property type="project" value="UniProtKB-SubCell"/>
</dbReference>
<dbReference type="GO" id="GO:0050136">
    <property type="term" value="F:NADH:ubiquinone reductase (non-electrogenic) activity"/>
    <property type="evidence" value="ECO:0007669"/>
    <property type="project" value="UniProtKB-UniRule"/>
</dbReference>
<dbReference type="GO" id="GO:0048038">
    <property type="term" value="F:quinone binding"/>
    <property type="evidence" value="ECO:0007669"/>
    <property type="project" value="UniProtKB-KW"/>
</dbReference>
<dbReference type="GO" id="GO:0042773">
    <property type="term" value="P:ATP synthesis coupled electron transport"/>
    <property type="evidence" value="ECO:0007669"/>
    <property type="project" value="InterPro"/>
</dbReference>
<dbReference type="Gene3D" id="1.10.287.3510">
    <property type="match status" value="1"/>
</dbReference>
<dbReference type="HAMAP" id="MF_01456">
    <property type="entry name" value="NDH1_NuoK"/>
    <property type="match status" value="1"/>
</dbReference>
<dbReference type="InterPro" id="IPR001133">
    <property type="entry name" value="NADH_UbQ_OxRdtase_chain4L/K"/>
</dbReference>
<dbReference type="InterPro" id="IPR039428">
    <property type="entry name" value="NUOK/Mnh_C1-like"/>
</dbReference>
<dbReference type="NCBIfam" id="NF004320">
    <property type="entry name" value="PRK05715.1-2"/>
    <property type="match status" value="1"/>
</dbReference>
<dbReference type="PANTHER" id="PTHR11434:SF16">
    <property type="entry name" value="NADH-UBIQUINONE OXIDOREDUCTASE CHAIN 4L"/>
    <property type="match status" value="1"/>
</dbReference>
<dbReference type="PANTHER" id="PTHR11434">
    <property type="entry name" value="NADH-UBIQUINONE OXIDOREDUCTASE SUBUNIT ND4L"/>
    <property type="match status" value="1"/>
</dbReference>
<dbReference type="Pfam" id="PF00420">
    <property type="entry name" value="Oxidored_q2"/>
    <property type="match status" value="1"/>
</dbReference>
<sequence>MVSLTSYAFVSMMLFSIGAIGVIARKNIFVIYMSIEMMLNGINLFLITFARYHFNIDPQIITVMVISIAAAEAAIFLSVIILLFRSKKSLNTDVFTSLTQGEN</sequence>
<feature type="chain" id="PRO_0000389932" description="NADH-quinone oxidoreductase subunit K">
    <location>
        <begin position="1"/>
        <end position="103"/>
    </location>
</feature>
<feature type="transmembrane region" description="Helical" evidence="1">
    <location>
        <begin position="4"/>
        <end position="24"/>
    </location>
</feature>
<feature type="transmembrane region" description="Helical" evidence="1">
    <location>
        <begin position="28"/>
        <end position="48"/>
    </location>
</feature>
<feature type="transmembrane region" description="Helical" evidence="1">
    <location>
        <begin position="64"/>
        <end position="84"/>
    </location>
</feature>
<organism>
    <name type="scientific">Aliarcobacter butzleri (strain RM4018)</name>
    <name type="common">Arcobacter butzleri</name>
    <dbReference type="NCBI Taxonomy" id="367737"/>
    <lineage>
        <taxon>Bacteria</taxon>
        <taxon>Pseudomonadati</taxon>
        <taxon>Campylobacterota</taxon>
        <taxon>Epsilonproteobacteria</taxon>
        <taxon>Campylobacterales</taxon>
        <taxon>Arcobacteraceae</taxon>
        <taxon>Aliarcobacter</taxon>
    </lineage>
</organism>
<comment type="function">
    <text evidence="1">NDH-1 shuttles electrons from NADH, via FMN and iron-sulfur (Fe-S) centers, to quinones in the respiratory chain. The immediate electron acceptor for the enzyme in this species is believed to be ubiquinone. Couples the redox reaction to proton translocation (for every two electrons transferred, four hydrogen ions are translocated across the cytoplasmic membrane), and thus conserves the redox energy in a proton gradient.</text>
</comment>
<comment type="catalytic activity">
    <reaction evidence="1">
        <text>a quinone + NADH + 5 H(+)(in) = a quinol + NAD(+) + 4 H(+)(out)</text>
        <dbReference type="Rhea" id="RHEA:57888"/>
        <dbReference type="ChEBI" id="CHEBI:15378"/>
        <dbReference type="ChEBI" id="CHEBI:24646"/>
        <dbReference type="ChEBI" id="CHEBI:57540"/>
        <dbReference type="ChEBI" id="CHEBI:57945"/>
        <dbReference type="ChEBI" id="CHEBI:132124"/>
    </reaction>
</comment>
<comment type="subunit">
    <text evidence="1">NDH-1 is composed of 14 different subunits. Subunits NuoA, H, J, K, L, M, N constitute the membrane sector of the complex.</text>
</comment>
<comment type="subcellular location">
    <subcellularLocation>
        <location evidence="1">Cell inner membrane</location>
        <topology evidence="1">Multi-pass membrane protein</topology>
    </subcellularLocation>
</comment>
<comment type="similarity">
    <text evidence="1">Belongs to the complex I subunit 4L family.</text>
</comment>
<gene>
    <name evidence="1" type="primary">nuoK</name>
    <name type="ordered locus">Abu_0305</name>
</gene>
<evidence type="ECO:0000255" key="1">
    <source>
        <dbReference type="HAMAP-Rule" id="MF_01456"/>
    </source>
</evidence>